<proteinExistence type="evidence at protein level"/>
<name>ADT3_YEAST</name>
<protein>
    <recommendedName>
        <fullName>ADP,ATP carrier protein 3</fullName>
    </recommendedName>
    <alternativeName>
        <fullName>ADP/ATP translocase 3</fullName>
    </alternativeName>
    <alternativeName>
        <fullName>Adenine nucleotide translocator 3</fullName>
        <shortName>ANT 3</shortName>
    </alternativeName>
</protein>
<organism>
    <name type="scientific">Saccharomyces cerevisiae (strain ATCC 204508 / S288c)</name>
    <name type="common">Baker's yeast</name>
    <dbReference type="NCBI Taxonomy" id="559292"/>
    <lineage>
        <taxon>Eukaryota</taxon>
        <taxon>Fungi</taxon>
        <taxon>Dikarya</taxon>
        <taxon>Ascomycota</taxon>
        <taxon>Saccharomycotina</taxon>
        <taxon>Saccharomycetes</taxon>
        <taxon>Saccharomycetales</taxon>
        <taxon>Saccharomycetaceae</taxon>
        <taxon>Saccharomyces</taxon>
    </lineage>
</organism>
<gene>
    <name type="primary">AAC3</name>
    <name type="ordered locus">YBR085W</name>
    <name type="ORF">YBR0753</name>
</gene>
<evidence type="ECO:0000250" key="1">
    <source>
        <dbReference type="UniProtKB" id="G2QNH0"/>
    </source>
</evidence>
<evidence type="ECO:0000250" key="2">
    <source>
        <dbReference type="UniProtKB" id="P02722"/>
    </source>
</evidence>
<evidence type="ECO:0000250" key="3">
    <source>
        <dbReference type="UniProtKB" id="P12235"/>
    </source>
</evidence>
<evidence type="ECO:0000250" key="4">
    <source>
        <dbReference type="UniProtKB" id="P18239"/>
    </source>
</evidence>
<evidence type="ECO:0000269" key="5">
    <source>
    </source>
</evidence>
<evidence type="ECO:0000269" key="6">
    <source>
    </source>
</evidence>
<evidence type="ECO:0000269" key="7">
    <source>
    </source>
</evidence>
<evidence type="ECO:0000305" key="8"/>
<evidence type="ECO:0000305" key="9">
    <source>
    </source>
</evidence>
<evidence type="ECO:0000305" key="10">
    <source>
    </source>
</evidence>
<evidence type="ECO:0007744" key="11">
    <source>
        <dbReference type="PDB" id="4C9J"/>
    </source>
</evidence>
<evidence type="ECO:0007744" key="12">
    <source>
        <dbReference type="PDB" id="4C9Q"/>
    </source>
</evidence>
<evidence type="ECO:0007829" key="13">
    <source>
        <dbReference type="PDB" id="4C9J"/>
    </source>
</evidence>
<evidence type="ECO:0007829" key="14">
    <source>
        <dbReference type="PDB" id="4C9Q"/>
    </source>
</evidence>
<keyword id="KW-0002">3D-structure</keyword>
<keyword id="KW-0050">Antiport</keyword>
<keyword id="KW-0472">Membrane</keyword>
<keyword id="KW-0496">Mitochondrion</keyword>
<keyword id="KW-0999">Mitochondrion inner membrane</keyword>
<keyword id="KW-1185">Reference proteome</keyword>
<keyword id="KW-0677">Repeat</keyword>
<keyword id="KW-0812">Transmembrane</keyword>
<keyword id="KW-1133">Transmembrane helix</keyword>
<keyword id="KW-0813">Transport</keyword>
<comment type="function">
    <text evidence="1 6">ADP:ATP antiporter that mediates import of ADP into the mitochondrial matrix for ATP synthesis, and export of ATP out to fuel the cell (PubMed:2165073). Cycles between the cytoplasmic-open state (c-state) and the matrix-open state (m-state): operates by the alternating access mechanism with a single substrate-binding site intermittently exposed to either the cytosolic (c-state) or matrix (m-state) side of the inner mitochondrial membrane (By similarity).</text>
</comment>
<comment type="catalytic activity">
    <reaction evidence="9">
        <text>ADP(in) + ATP(out) = ADP(out) + ATP(in)</text>
        <dbReference type="Rhea" id="RHEA:34999"/>
        <dbReference type="ChEBI" id="CHEBI:30616"/>
        <dbReference type="ChEBI" id="CHEBI:456216"/>
    </reaction>
    <physiologicalReaction direction="left-to-right" evidence="9">
        <dbReference type="Rhea" id="RHEA:35000"/>
    </physiologicalReaction>
</comment>
<comment type="activity regulation">
    <text evidence="1">The matrix-open state (m-state) is inhibited by the membrane-permeable bongkrekic acid (BKA). The cytoplasmic-open state (c-state) is inhibited by the membrane-impermeable toxic inhibitor carboxyatractyloside (CATR).</text>
</comment>
<comment type="subunit">
    <text evidence="1">Monomer.</text>
</comment>
<comment type="interaction">
    <interactant intactId="EBI-2300">
        <id>P18238</id>
    </interactant>
    <interactant intactId="EBI-2300">
        <id>P18238</id>
        <label>AAC3</label>
    </interactant>
    <organismsDiffer>false</organismsDiffer>
    <experiments>2</experiments>
</comment>
<comment type="subcellular location">
    <subcellularLocation>
        <location evidence="4">Mitochondrion inner membrane</location>
        <topology evidence="7">Multi-pass membrane protein</topology>
    </subcellularLocation>
</comment>
<comment type="domain">
    <text evidence="1">The transmembrane helices are not perpendicular to the plane of the membrane, but cross the membrane at an angle. Odd-numbered transmembrane helices exhibit a sharp kink, due to the presence of a conserved proline residue.</text>
</comment>
<comment type="miscellaneous">
    <text evidence="5">Present with 1080 molecules/cell in log phase SD medium.</text>
</comment>
<comment type="similarity">
    <text evidence="8">Belongs to the mitochondrial carrier (TC 2.A.29) family.</text>
</comment>
<feature type="chain" id="PRO_0000090595" description="ADP,ATP carrier protein 3">
    <location>
        <begin position="1"/>
        <end position="307"/>
    </location>
</feature>
<feature type="transmembrane region" description="Helical; Name=1" evidence="7">
    <location>
        <begin position="12"/>
        <end position="39"/>
    </location>
</feature>
<feature type="transmembrane region" description="Helical; Name=2" evidence="7">
    <location>
        <begin position="80"/>
        <end position="104"/>
    </location>
</feature>
<feature type="transmembrane region" description="Helical; Name=3" evidence="7">
    <location>
        <begin position="112"/>
        <end position="132"/>
    </location>
</feature>
<feature type="transmembrane region" description="Helical; Name=4" evidence="7">
    <location>
        <begin position="182"/>
        <end position="203"/>
    </location>
</feature>
<feature type="transmembrane region" description="Helical; Name=5" evidence="7">
    <location>
        <begin position="217"/>
        <end position="237"/>
    </location>
</feature>
<feature type="transmembrane region" description="Helical; Name=6" evidence="4">
    <location>
        <begin position="277"/>
        <end position="297"/>
    </location>
</feature>
<feature type="repeat" description="Solcar 1">
    <location>
        <begin position="10"/>
        <end position="103"/>
    </location>
</feature>
<feature type="repeat" description="Solcar 2">
    <location>
        <begin position="114"/>
        <end position="206"/>
    </location>
</feature>
<feature type="repeat" description="Solcar 3">
    <location>
        <begin position="214"/>
        <end position="300"/>
    </location>
</feature>
<feature type="region of interest" description="Important for transport activity" evidence="3">
    <location>
        <begin position="241"/>
        <end position="246"/>
    </location>
</feature>
<feature type="short sequence motif" description="Nucleotide carrier signature motif" evidence="2">
    <location>
        <begin position="241"/>
        <end position="246"/>
    </location>
</feature>
<feature type="binding site" evidence="10">
    <location>
        <position position="85"/>
    </location>
    <ligand>
        <name>ADP</name>
        <dbReference type="ChEBI" id="CHEBI:456216"/>
    </ligand>
</feature>
<feature type="binding site" evidence="10">
    <location>
        <position position="97"/>
    </location>
    <ligand>
        <name>ADP</name>
        <dbReference type="ChEBI" id="CHEBI:456216"/>
    </ligand>
</feature>
<feature type="binding site" evidence="10">
    <location>
        <position position="241"/>
    </location>
    <ligand>
        <name>ADP</name>
        <dbReference type="ChEBI" id="CHEBI:456216"/>
    </ligand>
</feature>
<feature type="helix" evidence="14">
    <location>
        <begin position="5"/>
        <end position="29"/>
    </location>
</feature>
<feature type="helix" evidence="14">
    <location>
        <begin position="31"/>
        <end position="41"/>
    </location>
</feature>
<feature type="helix" evidence="14">
    <location>
        <begin position="43"/>
        <end position="48"/>
    </location>
</feature>
<feature type="helix" evidence="14">
    <location>
        <begin position="59"/>
        <end position="69"/>
    </location>
</feature>
<feature type="helix" evidence="14">
    <location>
        <begin position="73"/>
        <end position="76"/>
    </location>
</feature>
<feature type="helix" evidence="14">
    <location>
        <begin position="79"/>
        <end position="104"/>
    </location>
</feature>
<feature type="turn" evidence="13">
    <location>
        <begin position="108"/>
        <end position="110"/>
    </location>
</feature>
<feature type="helix" evidence="14">
    <location>
        <begin position="112"/>
        <end position="146"/>
    </location>
</feature>
<feature type="helix" evidence="14">
    <location>
        <begin position="162"/>
        <end position="172"/>
    </location>
</feature>
<feature type="helix" evidence="14">
    <location>
        <begin position="175"/>
        <end position="178"/>
    </location>
</feature>
<feature type="turn" evidence="14">
    <location>
        <begin position="179"/>
        <end position="181"/>
    </location>
</feature>
<feature type="helix" evidence="14">
    <location>
        <begin position="182"/>
        <end position="202"/>
    </location>
</feature>
<feature type="helix" evidence="14">
    <location>
        <begin position="217"/>
        <end position="233"/>
    </location>
</feature>
<feature type="helix" evidence="14">
    <location>
        <begin position="235"/>
        <end position="246"/>
    </location>
</feature>
<feature type="turn" evidence="14">
    <location>
        <begin position="247"/>
        <end position="249"/>
    </location>
</feature>
<feature type="helix" evidence="14">
    <location>
        <begin position="257"/>
        <end position="268"/>
    </location>
</feature>
<feature type="helix" evidence="14">
    <location>
        <begin position="270"/>
        <end position="274"/>
    </location>
</feature>
<feature type="helix" evidence="14">
    <location>
        <begin position="277"/>
        <end position="301"/>
    </location>
</feature>
<feature type="strand" evidence="13">
    <location>
        <begin position="302"/>
        <end position="304"/>
    </location>
</feature>
<sequence length="307" mass="33313">MSSDAKQQETNFAINFLMGGVSAAIAKTAASPIERVKILIQNQDEMIKQGTLDKKYSGIVDCFKRTAKQEGLISFWRGNTANVIRYFPTQALNFAFKDKIKLMFGFKKEEGYGKWFAGNLASGGAAGALSLLFVYSLDFARTRLAADAKSSKKGGARQFNGLTDVYKKTLKSDGIAGLYRGFMPSVVGIVVYRGLYFGMFDSLKPLVLTGSLDGSFLASFLLGWVVTTGASTCSYPLDTVRRRMMMTSGQAVKYNGAIDCLKKIVASEGVGSLFKGCGANILRSVAGAGVISMYDQLQMILFGKKFK</sequence>
<reference key="1">
    <citation type="journal article" date="1990" name="J. Biol. Chem.">
        <title>A third ADP/ATP translocator gene in yeast.</title>
        <authorList>
            <person name="Kolarov J."/>
            <person name="Kolarova N."/>
            <person name="Nelson N."/>
        </authorList>
    </citation>
    <scope>NUCLEOTIDE SEQUENCE [GENOMIC DNA]</scope>
    <scope>FUNCTION</scope>
    <scope>CATALYTIC ACTIVITY</scope>
</reference>
<reference key="2">
    <citation type="journal article" date="1994" name="EMBO J.">
        <title>Complete DNA sequence of yeast chromosome II.</title>
        <authorList>
            <person name="Feldmann H."/>
            <person name="Aigle M."/>
            <person name="Aljinovic G."/>
            <person name="Andre B."/>
            <person name="Baclet M.C."/>
            <person name="Barthe C."/>
            <person name="Baur A."/>
            <person name="Becam A.-M."/>
            <person name="Biteau N."/>
            <person name="Boles E."/>
            <person name="Brandt T."/>
            <person name="Brendel M."/>
            <person name="Brueckner M."/>
            <person name="Bussereau F."/>
            <person name="Christiansen C."/>
            <person name="Contreras R."/>
            <person name="Crouzet M."/>
            <person name="Cziepluch C."/>
            <person name="Demolis N."/>
            <person name="Delaveau T."/>
            <person name="Doignon F."/>
            <person name="Domdey H."/>
            <person name="Duesterhus S."/>
            <person name="Dubois E."/>
            <person name="Dujon B."/>
            <person name="El Bakkoury M."/>
            <person name="Entian K.-D."/>
            <person name="Feuermann M."/>
            <person name="Fiers W."/>
            <person name="Fobo G.M."/>
            <person name="Fritz C."/>
            <person name="Gassenhuber J."/>
            <person name="Glansdorff N."/>
            <person name="Goffeau A."/>
            <person name="Grivell L.A."/>
            <person name="de Haan M."/>
            <person name="Hein C."/>
            <person name="Herbert C.J."/>
            <person name="Hollenberg C.P."/>
            <person name="Holmstroem K."/>
            <person name="Jacq C."/>
            <person name="Jacquet M."/>
            <person name="Jauniaux J.-C."/>
            <person name="Jonniaux J.-L."/>
            <person name="Kallesoee T."/>
            <person name="Kiesau P."/>
            <person name="Kirchrath L."/>
            <person name="Koetter P."/>
            <person name="Korol S."/>
            <person name="Liebl S."/>
            <person name="Logghe M."/>
            <person name="Lohan A.J.E."/>
            <person name="Louis E.J."/>
            <person name="Li Z.Y."/>
            <person name="Maat M.J."/>
            <person name="Mallet L."/>
            <person name="Mannhaupt G."/>
            <person name="Messenguy F."/>
            <person name="Miosga T."/>
            <person name="Molemans F."/>
            <person name="Mueller S."/>
            <person name="Nasr F."/>
            <person name="Obermaier B."/>
            <person name="Perea J."/>
            <person name="Pierard A."/>
            <person name="Piravandi E."/>
            <person name="Pohl F.M."/>
            <person name="Pohl T.M."/>
            <person name="Potier S."/>
            <person name="Proft M."/>
            <person name="Purnelle B."/>
            <person name="Ramezani Rad M."/>
            <person name="Rieger M."/>
            <person name="Rose M."/>
            <person name="Schaaff-Gerstenschlaeger I."/>
            <person name="Scherens B."/>
            <person name="Schwarzlose C."/>
            <person name="Skala J."/>
            <person name="Slonimski P.P."/>
            <person name="Smits P.H.M."/>
            <person name="Souciet J.-L."/>
            <person name="Steensma H.Y."/>
            <person name="Stucka R."/>
            <person name="Urrestarazu L.A."/>
            <person name="van der Aart Q.J.M."/>
            <person name="Van Dyck L."/>
            <person name="Vassarotti A."/>
            <person name="Vetter I."/>
            <person name="Vierendeels F."/>
            <person name="Vissers S."/>
            <person name="Wagner G."/>
            <person name="de Wergifosse P."/>
            <person name="Wolfe K.H."/>
            <person name="Zagulski M."/>
            <person name="Zimmermann F.K."/>
            <person name="Mewes H.-W."/>
            <person name="Kleine K."/>
        </authorList>
    </citation>
    <scope>NUCLEOTIDE SEQUENCE [LARGE SCALE GENOMIC DNA]</scope>
    <source>
        <strain>ATCC 204508 / S288c</strain>
    </source>
</reference>
<reference key="3">
    <citation type="journal article" date="2014" name="G3 (Bethesda)">
        <title>The reference genome sequence of Saccharomyces cerevisiae: Then and now.</title>
        <authorList>
            <person name="Engel S.R."/>
            <person name="Dietrich F.S."/>
            <person name="Fisk D.G."/>
            <person name="Binkley G."/>
            <person name="Balakrishnan R."/>
            <person name="Costanzo M.C."/>
            <person name="Dwight S.S."/>
            <person name="Hitz B.C."/>
            <person name="Karra K."/>
            <person name="Nash R.S."/>
            <person name="Weng S."/>
            <person name="Wong E.D."/>
            <person name="Lloyd P."/>
            <person name="Skrzypek M.S."/>
            <person name="Miyasato S.R."/>
            <person name="Simison M."/>
            <person name="Cherry J.M."/>
        </authorList>
    </citation>
    <scope>GENOME REANNOTATION</scope>
    <source>
        <strain>ATCC 204508 / S288c</strain>
    </source>
</reference>
<reference key="4">
    <citation type="journal article" date="2003" name="Nature">
        <title>Global analysis of protein expression in yeast.</title>
        <authorList>
            <person name="Ghaemmaghami S."/>
            <person name="Huh W.-K."/>
            <person name="Bower K."/>
            <person name="Howson R.W."/>
            <person name="Belle A."/>
            <person name="Dephoure N."/>
            <person name="O'Shea E.K."/>
            <person name="Weissman J.S."/>
        </authorList>
    </citation>
    <scope>LEVEL OF PROTEIN EXPRESSION [LARGE SCALE ANALYSIS]</scope>
</reference>
<reference evidence="11 12" key="5">
    <citation type="journal article" date="2014" name="Proc. Natl. Acad. Sci. U.S.A.">
        <title>Structures of yeast mitochondrial ADP/ATP carriers support a domain-based alternating-access transport mechanism.</title>
        <authorList>
            <person name="Ruprecht J.J."/>
            <person name="Hellawell A.M."/>
            <person name="Harding M."/>
            <person name="Crichton P.G."/>
            <person name="McCoy A.J."/>
            <person name="Kunji E.R."/>
        </authorList>
    </citation>
    <scope>X-RAY CRYSTALLOGRAPHY (3.20 ANGSTROMS) OF 3-307 IN COMPLEX WITH CARBOXYATRACTYLOSIDE</scope>
    <scope>TOPOLOGY</scope>
</reference>
<dbReference type="EMBL" id="M34076">
    <property type="protein sequence ID" value="AAA97485.1"/>
    <property type="molecule type" value="Genomic_DNA"/>
</dbReference>
<dbReference type="EMBL" id="Z35954">
    <property type="protein sequence ID" value="CAA85031.1"/>
    <property type="molecule type" value="Genomic_DNA"/>
</dbReference>
<dbReference type="EMBL" id="BK006936">
    <property type="protein sequence ID" value="DAA07205.1"/>
    <property type="molecule type" value="Genomic_DNA"/>
</dbReference>
<dbReference type="PIR" id="A36582">
    <property type="entry name" value="A36582"/>
</dbReference>
<dbReference type="RefSeq" id="NP_009642.3">
    <property type="nucleotide sequence ID" value="NM_001178433.3"/>
</dbReference>
<dbReference type="PDB" id="4C9J">
    <property type="method" value="X-ray"/>
    <property type="resolution" value="3.40 A"/>
    <property type="chains" value="A/B=3-307"/>
</dbReference>
<dbReference type="PDB" id="4C9Q">
    <property type="method" value="X-ray"/>
    <property type="resolution" value="3.20 A"/>
    <property type="chains" value="A/B=3-307"/>
</dbReference>
<dbReference type="PDBsum" id="4C9J"/>
<dbReference type="PDBsum" id="4C9Q"/>
<dbReference type="BMRB" id="P18238"/>
<dbReference type="SMR" id="P18238"/>
<dbReference type="BioGRID" id="32790">
    <property type="interactions" value="208"/>
</dbReference>
<dbReference type="DIP" id="DIP-6289N"/>
<dbReference type="FunCoup" id="P18238">
    <property type="interactions" value="917"/>
</dbReference>
<dbReference type="IntAct" id="P18238">
    <property type="interactions" value="20"/>
</dbReference>
<dbReference type="MINT" id="P18238"/>
<dbReference type="STRING" id="4932.YBR085W"/>
<dbReference type="TCDB" id="2.A.29.1.9">
    <property type="family name" value="the mitochondrial carrier (mc) family"/>
</dbReference>
<dbReference type="iPTMnet" id="P18238"/>
<dbReference type="PaxDb" id="4932-YBR085W"/>
<dbReference type="PeptideAtlas" id="P18238"/>
<dbReference type="DNASU" id="852380"/>
<dbReference type="EnsemblFungi" id="YBR085W_mRNA">
    <property type="protein sequence ID" value="YBR085W"/>
    <property type="gene ID" value="YBR085W"/>
</dbReference>
<dbReference type="GeneID" id="852380"/>
<dbReference type="KEGG" id="sce:YBR085W"/>
<dbReference type="AGR" id="SGD:S000000289"/>
<dbReference type="SGD" id="S000000289">
    <property type="gene designation" value="AAC3"/>
</dbReference>
<dbReference type="VEuPathDB" id="FungiDB:YBR085W"/>
<dbReference type="eggNOG" id="KOG0749">
    <property type="taxonomic scope" value="Eukaryota"/>
</dbReference>
<dbReference type="GeneTree" id="ENSGT00940000176325"/>
<dbReference type="HOGENOM" id="CLU_015166_12_0_1"/>
<dbReference type="InParanoid" id="P18238"/>
<dbReference type="OMA" id="CFARTLK"/>
<dbReference type="OrthoDB" id="270584at2759"/>
<dbReference type="BioCyc" id="YEAST:G3O-29052-MONOMER"/>
<dbReference type="Reactome" id="R-SCE-1268020">
    <property type="pathway name" value="Mitochondrial protein import"/>
</dbReference>
<dbReference type="Reactome" id="R-SCE-83936">
    <property type="pathway name" value="Transport of nucleosides and free purine and pyrimidine bases across the plasma membrane"/>
</dbReference>
<dbReference type="Reactome" id="R-SCE-9837999">
    <property type="pathway name" value="Mitochondrial protein degradation"/>
</dbReference>
<dbReference type="BioGRID-ORCS" id="852380">
    <property type="hits" value="0 hits in 10 CRISPR screens"/>
</dbReference>
<dbReference type="EvolutionaryTrace" id="P18238"/>
<dbReference type="PRO" id="PR:P18238"/>
<dbReference type="Proteomes" id="UP000002311">
    <property type="component" value="Chromosome II"/>
</dbReference>
<dbReference type="RNAct" id="P18238">
    <property type="molecule type" value="protein"/>
</dbReference>
<dbReference type="GO" id="GO:0005743">
    <property type="term" value="C:mitochondrial inner membrane"/>
    <property type="evidence" value="ECO:0000247"/>
    <property type="project" value="SGD"/>
</dbReference>
<dbReference type="GO" id="GO:0005739">
    <property type="term" value="C:mitochondrion"/>
    <property type="evidence" value="ECO:0007005"/>
    <property type="project" value="SGD"/>
</dbReference>
<dbReference type="GO" id="GO:0005471">
    <property type="term" value="F:ATP:ADP antiporter activity"/>
    <property type="evidence" value="ECO:0000247"/>
    <property type="project" value="SGD"/>
</dbReference>
<dbReference type="GO" id="GO:0042802">
    <property type="term" value="F:identical protein binding"/>
    <property type="evidence" value="ECO:0000353"/>
    <property type="project" value="IntAct"/>
</dbReference>
<dbReference type="GO" id="GO:0009061">
    <property type="term" value="P:anaerobic respiration"/>
    <property type="evidence" value="ECO:0000316"/>
    <property type="project" value="SGD"/>
</dbReference>
<dbReference type="GO" id="GO:0015886">
    <property type="term" value="P:heme transport"/>
    <property type="evidence" value="ECO:0000315"/>
    <property type="project" value="SGD"/>
</dbReference>
<dbReference type="GO" id="GO:0140021">
    <property type="term" value="P:mitochondrial ADP transmembrane transport"/>
    <property type="evidence" value="ECO:0007669"/>
    <property type="project" value="InterPro"/>
</dbReference>
<dbReference type="GO" id="GO:1990544">
    <property type="term" value="P:mitochondrial ATP transmembrane transport"/>
    <property type="evidence" value="ECO:0007669"/>
    <property type="project" value="InterPro"/>
</dbReference>
<dbReference type="GO" id="GO:0055085">
    <property type="term" value="P:transmembrane transport"/>
    <property type="evidence" value="ECO:0000247"/>
    <property type="project" value="SGD"/>
</dbReference>
<dbReference type="FunFam" id="1.50.40.10:FF:000001">
    <property type="entry name" value="ADP,ATP carrier protein, mitochondrial"/>
    <property type="match status" value="1"/>
</dbReference>
<dbReference type="Gene3D" id="1.50.40.10">
    <property type="entry name" value="Mitochondrial carrier domain"/>
    <property type="match status" value="1"/>
</dbReference>
<dbReference type="InterPro" id="IPR002113">
    <property type="entry name" value="ADT_euk_type"/>
</dbReference>
<dbReference type="InterPro" id="IPR002067">
    <property type="entry name" value="Mit_carrier"/>
</dbReference>
<dbReference type="InterPro" id="IPR018108">
    <property type="entry name" value="Mitochondrial_sb/sol_carrier"/>
</dbReference>
<dbReference type="InterPro" id="IPR023395">
    <property type="entry name" value="Mt_carrier_dom_sf"/>
</dbReference>
<dbReference type="PANTHER" id="PTHR45635">
    <property type="entry name" value="ADP,ATP CARRIER PROTEIN 1-RELATED-RELATED"/>
    <property type="match status" value="1"/>
</dbReference>
<dbReference type="PANTHER" id="PTHR45635:SF14">
    <property type="entry name" value="ADP_ATP TRANSLOCASE"/>
    <property type="match status" value="1"/>
</dbReference>
<dbReference type="Pfam" id="PF00153">
    <property type="entry name" value="Mito_carr"/>
    <property type="match status" value="3"/>
</dbReference>
<dbReference type="PRINTS" id="PR00927">
    <property type="entry name" value="ADPTRNSLCASE"/>
</dbReference>
<dbReference type="PRINTS" id="PR00926">
    <property type="entry name" value="MITOCARRIER"/>
</dbReference>
<dbReference type="SUPFAM" id="SSF103506">
    <property type="entry name" value="Mitochondrial carrier"/>
    <property type="match status" value="1"/>
</dbReference>
<dbReference type="PROSITE" id="PS50920">
    <property type="entry name" value="SOLCAR"/>
    <property type="match status" value="3"/>
</dbReference>
<accession>P18238</accession>
<accession>D6VQ85</accession>